<name>TC32B_BRANA</name>
<protein>
    <recommendedName>
        <fullName evidence="5">Short-chain dehydrogenase TIC 32 B, chloroplastic</fullName>
        <ecNumber evidence="5">1.1.1.-</ecNumber>
    </recommendedName>
    <alternativeName>
        <fullName evidence="5">Translocon at the inner envelope membrane of chloroplasts 32 B</fullName>
        <shortName evidence="5">BnTIC32B</shortName>
    </alternativeName>
</protein>
<accession>A0A078ISJ6</accession>
<dbReference type="EC" id="1.1.1.-" evidence="5"/>
<dbReference type="EMBL" id="LK033133">
    <property type="protein sequence ID" value="CDY52816.1"/>
    <property type="molecule type" value="Genomic_DNA"/>
</dbReference>
<dbReference type="SMR" id="A0A078ISJ6"/>
<dbReference type="STRING" id="3708.A0A078ISJ6"/>
<dbReference type="PaxDb" id="3708-A0A078ISJ6"/>
<dbReference type="EnsemblPlants" id="CDY52816">
    <property type="protein sequence ID" value="CDY52816"/>
    <property type="gene ID" value="GSBRNA2T00007890001"/>
</dbReference>
<dbReference type="Gramene" id="CDY52816">
    <property type="protein sequence ID" value="CDY52816"/>
    <property type="gene ID" value="GSBRNA2T00007890001"/>
</dbReference>
<dbReference type="OMA" id="IWLCSRS"/>
<dbReference type="Proteomes" id="UP000028999">
    <property type="component" value="Unassembled WGS sequence"/>
</dbReference>
<dbReference type="GO" id="GO:0009706">
    <property type="term" value="C:chloroplast inner membrane"/>
    <property type="evidence" value="ECO:0007669"/>
    <property type="project" value="UniProtKB-SubCell"/>
</dbReference>
<dbReference type="GO" id="GO:0005516">
    <property type="term" value="F:calmodulin binding"/>
    <property type="evidence" value="ECO:0007669"/>
    <property type="project" value="UniProtKB-KW"/>
</dbReference>
<dbReference type="GO" id="GO:0016491">
    <property type="term" value="F:oxidoreductase activity"/>
    <property type="evidence" value="ECO:0007669"/>
    <property type="project" value="UniProtKB-KW"/>
</dbReference>
<dbReference type="GO" id="GO:0015031">
    <property type="term" value="P:protein transport"/>
    <property type="evidence" value="ECO:0007669"/>
    <property type="project" value="UniProtKB-KW"/>
</dbReference>
<dbReference type="CDD" id="cd05327">
    <property type="entry name" value="retinol-DH_like_SDR_c_like"/>
    <property type="match status" value="1"/>
</dbReference>
<dbReference type="Gene3D" id="3.40.50.720">
    <property type="entry name" value="NAD(P)-binding Rossmann-like Domain"/>
    <property type="match status" value="1"/>
</dbReference>
<dbReference type="InterPro" id="IPR036291">
    <property type="entry name" value="NAD(P)-bd_dom_sf"/>
</dbReference>
<dbReference type="InterPro" id="IPR002347">
    <property type="entry name" value="SDR_fam"/>
</dbReference>
<dbReference type="InterPro" id="IPR055280">
    <property type="entry name" value="TIC32"/>
</dbReference>
<dbReference type="PANTHER" id="PTHR48476">
    <property type="entry name" value="SHORT-CHAIN DEHYDROGENASE TIC 32, CHLOROPLASTIC-LIKE"/>
    <property type="match status" value="1"/>
</dbReference>
<dbReference type="PANTHER" id="PTHR48476:SF1">
    <property type="entry name" value="SHORT-CHAIN DEHYDROGENASE TIC 32, CHLOROPLASTIC-LIKE"/>
    <property type="match status" value="1"/>
</dbReference>
<dbReference type="Pfam" id="PF00106">
    <property type="entry name" value="adh_short"/>
    <property type="match status" value="1"/>
</dbReference>
<dbReference type="PRINTS" id="PR00081">
    <property type="entry name" value="GDHRDH"/>
</dbReference>
<dbReference type="PRINTS" id="PR00080">
    <property type="entry name" value="SDRFAMILY"/>
</dbReference>
<dbReference type="SUPFAM" id="SSF51735">
    <property type="entry name" value="NAD(P)-binding Rossmann-fold domains"/>
    <property type="match status" value="1"/>
</dbReference>
<evidence type="ECO:0000250" key="1">
    <source>
        <dbReference type="UniProtKB" id="A2RVM0"/>
    </source>
</evidence>
<evidence type="ECO:0000250" key="2">
    <source>
        <dbReference type="UniProtKB" id="P00334"/>
    </source>
</evidence>
<evidence type="ECO:0000250" key="3">
    <source>
        <dbReference type="UniProtKB" id="Q6RVV4"/>
    </source>
</evidence>
<evidence type="ECO:0000250" key="4">
    <source>
        <dbReference type="UniProtKB" id="Q8KES3"/>
    </source>
</evidence>
<evidence type="ECO:0000305" key="5"/>
<evidence type="ECO:0000312" key="6">
    <source>
        <dbReference type="EMBL" id="CDY52816.1"/>
    </source>
</evidence>
<comment type="function">
    <text evidence="1">Involved in protein precursor import into chloroplasts.</text>
</comment>
<comment type="subunit">
    <text evidence="1">Part of the Tic complex.</text>
</comment>
<comment type="subcellular location">
    <subcellularLocation>
        <location evidence="1">Plastid</location>
        <location evidence="1">Chloroplast inner membrane</location>
    </subcellularLocation>
</comment>
<comment type="similarity">
    <text evidence="5">Belongs to the short-chain dehydrogenases/reductases (SDR) family.</text>
</comment>
<sequence length="320" mass="34865">MEIYGMVTGKAGKSGYGSASTAEDVTHSIDAKHLTAIITGGTSGIGLEAARVLGMRGAHVIIAARNTKAANDSKEMILQMYPNARIDCLQLDLSSIKSVRSFIHQFLALNVPLNILINNAGVMFCPFQLSEDGIESQFATNHIGHFLLTNLLLDKMKSSARESGIEGRIVNLSSIAHTYTYTEGIMFDYINDPDRYSEKKAYGQSKLANLLHSNALSRKLQEEGVNITINSVHPGLITTNLFRHSGLGMAVLKAMSFFLWKNIPQGAATTCYVALHPDLKGVTGKYFTDCNVTTPSNFAIDTTLADKLWDFSIKLVDSLP</sequence>
<gene>
    <name evidence="5" type="primary">TIC32B</name>
    <name evidence="6" type="synonym">BnaC04g53630D</name>
    <name evidence="6" type="ORF">GSBRNA2T00007890001</name>
</gene>
<feature type="chain" id="PRO_0000448490" description="Short-chain dehydrogenase TIC 32 B, chloroplastic">
    <location>
        <begin position="1"/>
        <end position="320"/>
    </location>
</feature>
<feature type="region of interest" description="Interaction with calmodulin" evidence="3">
    <location>
        <begin position="301"/>
        <end position="317"/>
    </location>
</feature>
<feature type="active site" description="Proton acceptor" evidence="2">
    <location>
        <position position="196"/>
    </location>
</feature>
<feature type="binding site" evidence="4">
    <location>
        <begin position="40"/>
        <end position="46"/>
    </location>
    <ligand>
        <name>NADP(+)</name>
        <dbReference type="ChEBI" id="CHEBI:58349"/>
    </ligand>
</feature>
<feature type="binding site" evidence="4">
    <location>
        <begin position="92"/>
        <end position="93"/>
    </location>
    <ligand>
        <name>NADP(+)</name>
        <dbReference type="ChEBI" id="CHEBI:58349"/>
    </ligand>
</feature>
<feature type="binding site" evidence="4">
    <location>
        <position position="119"/>
    </location>
    <ligand>
        <name>NADP(+)</name>
        <dbReference type="ChEBI" id="CHEBI:58349"/>
    </ligand>
</feature>
<feature type="binding site" evidence="4">
    <location>
        <position position="140"/>
    </location>
    <ligand>
        <name>NADP(+)</name>
        <dbReference type="ChEBI" id="CHEBI:58349"/>
    </ligand>
</feature>
<feature type="binding site" evidence="4">
    <location>
        <position position="174"/>
    </location>
    <ligand>
        <name>substrate</name>
    </ligand>
</feature>
<keyword id="KW-0112">Calmodulin-binding</keyword>
<keyword id="KW-0150">Chloroplast</keyword>
<keyword id="KW-0472">Membrane</keyword>
<keyword id="KW-0521">NADP</keyword>
<keyword id="KW-0560">Oxidoreductase</keyword>
<keyword id="KW-0934">Plastid</keyword>
<keyword id="KW-1001">Plastid inner membrane</keyword>
<keyword id="KW-0653">Protein transport</keyword>
<keyword id="KW-1185">Reference proteome</keyword>
<keyword id="KW-0813">Transport</keyword>
<reference key="1">
    <citation type="journal article" date="2014" name="Science">
        <title>Plant genetics. Early allopolyploid evolution in the post-Neolithic Brassica napus oilseed genome.</title>
        <authorList>
            <person name="Chalhoub B."/>
            <person name="Denoeud F."/>
            <person name="Liu S."/>
            <person name="Parkin I.A."/>
            <person name="Tang H."/>
            <person name="Wang X."/>
            <person name="Chiquet J."/>
            <person name="Belcram H."/>
            <person name="Tong C."/>
            <person name="Samans B."/>
            <person name="Correa M."/>
            <person name="Da Silva C."/>
            <person name="Just J."/>
            <person name="Falentin C."/>
            <person name="Koh C.S."/>
            <person name="Le Clainche I."/>
            <person name="Bernard M."/>
            <person name="Bento P."/>
            <person name="Noel B."/>
            <person name="Labadie K."/>
            <person name="Alberti A."/>
            <person name="Charles M."/>
            <person name="Arnaud D."/>
            <person name="Guo H."/>
            <person name="Daviaud C."/>
            <person name="Alamery S."/>
            <person name="Jabbari K."/>
            <person name="Zhao M."/>
            <person name="Edger P.P."/>
            <person name="Chelaifa H."/>
            <person name="Tack D."/>
            <person name="Lassalle G."/>
            <person name="Mestiri I."/>
            <person name="Schnel N."/>
            <person name="Le Paslier M.C."/>
            <person name="Fan G."/>
            <person name="Renault V."/>
            <person name="Bayer P.E."/>
            <person name="Golicz A.A."/>
            <person name="Manoli S."/>
            <person name="Lee T.H."/>
            <person name="Thi V.H."/>
            <person name="Chalabi S."/>
            <person name="Hu Q."/>
            <person name="Fan C."/>
            <person name="Tollenaere R."/>
            <person name="Lu Y."/>
            <person name="Battail C."/>
            <person name="Shen J."/>
            <person name="Sidebottom C.H."/>
            <person name="Wang X."/>
            <person name="Canaguier A."/>
            <person name="Chauveau A."/>
            <person name="Berard A."/>
            <person name="Deniot G."/>
            <person name="Guan M."/>
            <person name="Liu Z."/>
            <person name="Sun F."/>
            <person name="Lim Y.P."/>
            <person name="Lyons E."/>
            <person name="Town C.D."/>
            <person name="Bancroft I."/>
            <person name="Wang X."/>
            <person name="Meng J."/>
            <person name="Ma J."/>
            <person name="Pires J.C."/>
            <person name="King G.J."/>
            <person name="Brunel D."/>
            <person name="Delourme R."/>
            <person name="Renard M."/>
            <person name="Aury J.M."/>
            <person name="Adams K.L."/>
            <person name="Batley J."/>
            <person name="Snowdon R.J."/>
            <person name="Tost J."/>
            <person name="Edwards D."/>
            <person name="Zhou Y."/>
            <person name="Hua W."/>
            <person name="Sharpe A.G."/>
            <person name="Paterson A.H."/>
            <person name="Guan C."/>
            <person name="Wincker P."/>
        </authorList>
    </citation>
    <scope>NUCLEOTIDE SEQUENCE [LARGE SCALE GENOMIC DNA]</scope>
    <source>
        <strain>cv. Darmor-bzh</strain>
    </source>
</reference>
<proteinExistence type="inferred from homology"/>
<organism>
    <name type="scientific">Brassica napus</name>
    <name type="common">Rape</name>
    <dbReference type="NCBI Taxonomy" id="3708"/>
    <lineage>
        <taxon>Eukaryota</taxon>
        <taxon>Viridiplantae</taxon>
        <taxon>Streptophyta</taxon>
        <taxon>Embryophyta</taxon>
        <taxon>Tracheophyta</taxon>
        <taxon>Spermatophyta</taxon>
        <taxon>Magnoliopsida</taxon>
        <taxon>eudicotyledons</taxon>
        <taxon>Gunneridae</taxon>
        <taxon>Pentapetalae</taxon>
        <taxon>rosids</taxon>
        <taxon>malvids</taxon>
        <taxon>Brassicales</taxon>
        <taxon>Brassicaceae</taxon>
        <taxon>Brassiceae</taxon>
        <taxon>Brassica</taxon>
    </lineage>
</organism>